<protein>
    <recommendedName>
        <fullName>Glutaredoxin-1</fullName>
    </recommendedName>
</protein>
<comment type="function">
    <text evidence="1">Has thioltransferase and dehydroascorbate reductase activities.</text>
</comment>
<comment type="subcellular location">
    <subcellularLocation>
        <location>Virion</location>
    </subcellularLocation>
    <text evidence="1">Localizes to the virion core.</text>
</comment>
<comment type="induction">
    <text evidence="2">Expressed in the intermediate phase of the viral replicative cycle.</text>
</comment>
<comment type="similarity">
    <text evidence="4">Belongs to the glutaredoxin family.</text>
</comment>
<organism>
    <name type="scientific">Camelpox virus (strain M-96)</name>
    <dbReference type="NCBI Taxonomy" id="203173"/>
    <lineage>
        <taxon>Viruses</taxon>
        <taxon>Varidnaviria</taxon>
        <taxon>Bamfordvirae</taxon>
        <taxon>Nucleocytoviricota</taxon>
        <taxon>Pokkesviricetes</taxon>
        <taxon>Chitovirales</taxon>
        <taxon>Poxviridae</taxon>
        <taxon>Chordopoxvirinae</taxon>
        <taxon>Orthopoxvirus</taxon>
        <taxon>Camelpox virus</taxon>
    </lineage>
</organism>
<accession>Q8V2V1</accession>
<keyword id="KW-1015">Disulfide bond</keyword>
<keyword id="KW-0249">Electron transport</keyword>
<keyword id="KW-0676">Redox-active center</keyword>
<keyword id="KW-0813">Transport</keyword>
<keyword id="KW-0946">Virion</keyword>
<name>GLRX1_CAMPM</name>
<organismHost>
    <name type="scientific">Camelus</name>
    <dbReference type="NCBI Taxonomy" id="9836"/>
</organismHost>
<sequence>MAEEFVQQRLANNKVTIFVKFTCPFCRNALDILNKFSFKRGAYEIVDIKEFKPENELRDYFEQITGGRTVPRIFFGKTSIGGYSDMLEIDNMDALGDILSSIGVLRTC</sequence>
<proteinExistence type="inferred from homology"/>
<dbReference type="EMBL" id="AF438165">
    <property type="protein sequence ID" value="AAL73774.1"/>
    <property type="molecule type" value="Genomic_DNA"/>
</dbReference>
<dbReference type="RefSeq" id="NP_570457.1">
    <property type="nucleotide sequence ID" value="NC_003391.1"/>
</dbReference>
<dbReference type="SMR" id="Q8V2V1"/>
<dbReference type="KEGG" id="vg:932572"/>
<dbReference type="Proteomes" id="UP000152221">
    <property type="component" value="Genome"/>
</dbReference>
<dbReference type="GO" id="GO:0044423">
    <property type="term" value="C:virion component"/>
    <property type="evidence" value="ECO:0007669"/>
    <property type="project" value="UniProtKB-KW"/>
</dbReference>
<dbReference type="GO" id="GO:0015038">
    <property type="term" value="F:glutathione disulfide oxidoreductase activity"/>
    <property type="evidence" value="ECO:0007669"/>
    <property type="project" value="TreeGrafter"/>
</dbReference>
<dbReference type="Gene3D" id="3.40.30.10">
    <property type="entry name" value="Glutaredoxin"/>
    <property type="match status" value="1"/>
</dbReference>
<dbReference type="InterPro" id="IPR011767">
    <property type="entry name" value="GLR_AS"/>
</dbReference>
<dbReference type="InterPro" id="IPR047185">
    <property type="entry name" value="GLRX1"/>
</dbReference>
<dbReference type="InterPro" id="IPR002109">
    <property type="entry name" value="Glutaredoxin"/>
</dbReference>
<dbReference type="InterPro" id="IPR011899">
    <property type="entry name" value="Glutaredoxin_euk/vir"/>
</dbReference>
<dbReference type="InterPro" id="IPR014025">
    <property type="entry name" value="Glutaredoxin_subgr"/>
</dbReference>
<dbReference type="InterPro" id="IPR036249">
    <property type="entry name" value="Thioredoxin-like_sf"/>
</dbReference>
<dbReference type="NCBIfam" id="TIGR02180">
    <property type="entry name" value="GRX_euk"/>
    <property type="match status" value="1"/>
</dbReference>
<dbReference type="PANTHER" id="PTHR46185">
    <property type="entry name" value="GLUTAREDOXIN-1"/>
    <property type="match status" value="1"/>
</dbReference>
<dbReference type="PANTHER" id="PTHR46185:SF1">
    <property type="entry name" value="GLUTAREDOXIN-1"/>
    <property type="match status" value="1"/>
</dbReference>
<dbReference type="Pfam" id="PF00462">
    <property type="entry name" value="Glutaredoxin"/>
    <property type="match status" value="1"/>
</dbReference>
<dbReference type="PRINTS" id="PR00160">
    <property type="entry name" value="GLUTAREDOXIN"/>
</dbReference>
<dbReference type="SUPFAM" id="SSF52833">
    <property type="entry name" value="Thioredoxin-like"/>
    <property type="match status" value="1"/>
</dbReference>
<dbReference type="PROSITE" id="PS00195">
    <property type="entry name" value="GLUTAREDOXIN_1"/>
    <property type="match status" value="1"/>
</dbReference>
<dbReference type="PROSITE" id="PS51354">
    <property type="entry name" value="GLUTAREDOXIN_2"/>
    <property type="match status" value="1"/>
</dbReference>
<reference key="1">
    <citation type="journal article" date="2002" name="Virology">
        <title>The genome of camelpox virus.</title>
        <authorList>
            <person name="Afonso C.L."/>
            <person name="Tulman E.R."/>
            <person name="Lu Z."/>
            <person name="Zsak L."/>
            <person name="Sandybaev N.T."/>
            <person name="Kerembekova U.Z."/>
            <person name="Zaitsev V.L."/>
            <person name="Kutish G.F."/>
            <person name="Rock D.L."/>
        </authorList>
    </citation>
    <scope>NUCLEOTIDE SEQUENCE [LARGE SCALE GENOMIC DNA]</scope>
</reference>
<feature type="chain" id="PRO_0000141620" description="Glutaredoxin-1">
    <location>
        <begin position="1"/>
        <end position="108"/>
    </location>
</feature>
<feature type="domain" description="Glutaredoxin" evidence="3">
    <location>
        <begin position="3"/>
        <end position="106"/>
    </location>
</feature>
<feature type="disulfide bond" description="Redox-active" evidence="2">
    <location>
        <begin position="23"/>
        <end position="26"/>
    </location>
</feature>
<gene>
    <name type="primary">OPG075</name>
    <name type="ordered locus">CMLV067</name>
</gene>
<evidence type="ECO:0000250" key="1"/>
<evidence type="ECO:0000250" key="2">
    <source>
        <dbReference type="UniProtKB" id="P68692"/>
    </source>
</evidence>
<evidence type="ECO:0000255" key="3">
    <source>
        <dbReference type="PROSITE-ProRule" id="PRU00686"/>
    </source>
</evidence>
<evidence type="ECO:0000305" key="4"/>